<protein>
    <recommendedName>
        <fullName evidence="3">Ciliary microtubule inner protein 5</fullName>
    </recommendedName>
</protein>
<proteinExistence type="evidence at protein level"/>
<comment type="interaction">
    <interactant intactId="EBI-10290932">
        <id>Q96LR7</id>
    </interactant>
    <interactant intactId="EBI-752440">
        <id>O15217</id>
        <label>GSTA4</label>
    </interactant>
    <organismsDiffer>false</organismsDiffer>
    <experiments>6</experiments>
</comment>
<comment type="interaction">
    <interactant intactId="EBI-10290932">
        <id>Q96LR7</id>
    </interactant>
    <interactant intactId="EBI-749731">
        <id>Q9UHY1</id>
        <label>NRBP1</label>
    </interactant>
    <organismsDiffer>false</organismsDiffer>
    <experiments>3</experiments>
</comment>
<comment type="subcellular location">
    <subcellularLocation>
        <location evidence="2">Cell projection</location>
        <location evidence="2">Cilium</location>
    </subcellularLocation>
</comment>
<accession>Q96LR7</accession>
<accession>A8K9W3</accession>
<accession>D6W503</accession>
<gene>
    <name evidence="3" type="primary">CIMIP5</name>
    <name type="synonym">C2orf50</name>
</gene>
<name>CMIP5_HUMAN</name>
<organism>
    <name type="scientific">Homo sapiens</name>
    <name type="common">Human</name>
    <dbReference type="NCBI Taxonomy" id="9606"/>
    <lineage>
        <taxon>Eukaryota</taxon>
        <taxon>Metazoa</taxon>
        <taxon>Chordata</taxon>
        <taxon>Craniata</taxon>
        <taxon>Vertebrata</taxon>
        <taxon>Euteleostomi</taxon>
        <taxon>Mammalia</taxon>
        <taxon>Eutheria</taxon>
        <taxon>Euarchontoglires</taxon>
        <taxon>Primates</taxon>
        <taxon>Haplorrhini</taxon>
        <taxon>Catarrhini</taxon>
        <taxon>Hominidae</taxon>
        <taxon>Homo</taxon>
    </lineage>
</organism>
<dbReference type="EMBL" id="AK057872">
    <property type="protein sequence ID" value="BAB71603.1"/>
    <property type="molecule type" value="mRNA"/>
</dbReference>
<dbReference type="EMBL" id="AK292828">
    <property type="protein sequence ID" value="BAF85517.1"/>
    <property type="molecule type" value="mRNA"/>
</dbReference>
<dbReference type="EMBL" id="CH471053">
    <property type="protein sequence ID" value="EAX00943.1"/>
    <property type="molecule type" value="Genomic_DNA"/>
</dbReference>
<dbReference type="EMBL" id="CH471053">
    <property type="protein sequence ID" value="EAX00944.1"/>
    <property type="molecule type" value="Genomic_DNA"/>
</dbReference>
<dbReference type="EMBL" id="BC120930">
    <property type="protein sequence ID" value="AAI20931.1"/>
    <property type="molecule type" value="mRNA"/>
</dbReference>
<dbReference type="CCDS" id="CCDS1678.1"/>
<dbReference type="RefSeq" id="NP_001358249.1">
    <property type="nucleotide sequence ID" value="NM_001371320.1"/>
</dbReference>
<dbReference type="RefSeq" id="NP_001358250.1">
    <property type="nucleotide sequence ID" value="NM_001371321.1"/>
</dbReference>
<dbReference type="RefSeq" id="NP_872306.1">
    <property type="nucleotide sequence ID" value="NM_182500.4"/>
</dbReference>
<dbReference type="RefSeq" id="XP_006711920.1">
    <property type="nucleotide sequence ID" value="XM_006711857.3"/>
</dbReference>
<dbReference type="RefSeq" id="XP_006711921.1">
    <property type="nucleotide sequence ID" value="XM_006711858.3"/>
</dbReference>
<dbReference type="RefSeq" id="XP_006711922.1">
    <property type="nucleotide sequence ID" value="XM_006711859.3"/>
</dbReference>
<dbReference type="RefSeq" id="XP_054196565.1">
    <property type="nucleotide sequence ID" value="XM_054340590.1"/>
</dbReference>
<dbReference type="SMR" id="Q96LR7"/>
<dbReference type="BioGRID" id="126256">
    <property type="interactions" value="12"/>
</dbReference>
<dbReference type="FunCoup" id="Q96LR7">
    <property type="interactions" value="20"/>
</dbReference>
<dbReference type="IntAct" id="Q96LR7">
    <property type="interactions" value="10"/>
</dbReference>
<dbReference type="MINT" id="Q96LR7"/>
<dbReference type="STRING" id="9606.ENSP00000370997"/>
<dbReference type="GlyGen" id="Q96LR7">
    <property type="glycosylation" value="1 site"/>
</dbReference>
<dbReference type="BioMuta" id="C2orf50"/>
<dbReference type="MassIVE" id="Q96LR7"/>
<dbReference type="PaxDb" id="9606-ENSP00000370997"/>
<dbReference type="PeptideAtlas" id="Q96LR7"/>
<dbReference type="ProteomicsDB" id="77240"/>
<dbReference type="Antibodypedia" id="58728">
    <property type="antibodies" value="57 antibodies from 8 providers"/>
</dbReference>
<dbReference type="DNASU" id="130813"/>
<dbReference type="Ensembl" id="ENST00000381585.8">
    <property type="protein sequence ID" value="ENSP00000370997.3"/>
    <property type="gene ID" value="ENSG00000150873.12"/>
</dbReference>
<dbReference type="Ensembl" id="ENST00000405022.3">
    <property type="protein sequence ID" value="ENSP00000384186.3"/>
    <property type="gene ID" value="ENSG00000150873.12"/>
</dbReference>
<dbReference type="GeneID" id="130813"/>
<dbReference type="KEGG" id="hsa:130813"/>
<dbReference type="MANE-Select" id="ENST00000381585.8">
    <property type="protein sequence ID" value="ENSP00000370997.3"/>
    <property type="RefSeq nucleotide sequence ID" value="NM_001371321.1"/>
    <property type="RefSeq protein sequence ID" value="NP_001358250.1"/>
</dbReference>
<dbReference type="UCSC" id="uc010yji.1">
    <property type="organism name" value="human"/>
</dbReference>
<dbReference type="AGR" id="HGNC:26324"/>
<dbReference type="CTD" id="130813"/>
<dbReference type="GeneCards" id="CIMIP5"/>
<dbReference type="HGNC" id="HGNC:26324">
    <property type="gene designation" value="CIMIP5"/>
</dbReference>
<dbReference type="HPA" id="ENSG00000150873">
    <property type="expression patterns" value="Group enriched (choroid plexus, fallopian tube)"/>
</dbReference>
<dbReference type="neXtProt" id="NX_Q96LR7"/>
<dbReference type="OpenTargets" id="ENSG00000150873"/>
<dbReference type="PharmGKB" id="PA162379180"/>
<dbReference type="VEuPathDB" id="HostDB:ENSG00000150873"/>
<dbReference type="eggNOG" id="ENOG502S2T8">
    <property type="taxonomic scope" value="Eukaryota"/>
</dbReference>
<dbReference type="GeneTree" id="ENSGT00940000154459"/>
<dbReference type="HOGENOM" id="CLU_101818_0_0_1"/>
<dbReference type="InParanoid" id="Q96LR7"/>
<dbReference type="OMA" id="DFFFMEG"/>
<dbReference type="OrthoDB" id="9972212at2759"/>
<dbReference type="PAN-GO" id="Q96LR7">
    <property type="GO annotations" value="0 GO annotations based on evolutionary models"/>
</dbReference>
<dbReference type="PhylomeDB" id="Q96LR7"/>
<dbReference type="TreeFam" id="TF329466"/>
<dbReference type="PathwayCommons" id="Q96LR7"/>
<dbReference type="SignaLink" id="Q96LR7"/>
<dbReference type="BioGRID-ORCS" id="130813">
    <property type="hits" value="14 hits in 1111 CRISPR screens"/>
</dbReference>
<dbReference type="GenomeRNAi" id="130813"/>
<dbReference type="Pharos" id="Q96LR7">
    <property type="development level" value="Tdark"/>
</dbReference>
<dbReference type="PRO" id="PR:Q96LR7"/>
<dbReference type="Proteomes" id="UP000005640">
    <property type="component" value="Chromosome 2"/>
</dbReference>
<dbReference type="RNAct" id="Q96LR7">
    <property type="molecule type" value="protein"/>
</dbReference>
<dbReference type="Bgee" id="ENSG00000150873">
    <property type="expression patterns" value="Expressed in right uterine tube and 66 other cell types or tissues"/>
</dbReference>
<dbReference type="GO" id="GO:0005929">
    <property type="term" value="C:cilium"/>
    <property type="evidence" value="ECO:0000314"/>
    <property type="project" value="UniProtKB"/>
</dbReference>
<dbReference type="InterPro" id="IPR020339">
    <property type="entry name" value="C20orf85-like"/>
</dbReference>
<dbReference type="PANTHER" id="PTHR31909">
    <property type="entry name" value="CHROMOSOME 20 ORF85 FAMILY MEMBER"/>
    <property type="match status" value="1"/>
</dbReference>
<dbReference type="PANTHER" id="PTHR31909:SF2">
    <property type="entry name" value="RIKEN CDNA 2410004P03 GENE"/>
    <property type="match status" value="1"/>
</dbReference>
<dbReference type="Pfam" id="PF14945">
    <property type="entry name" value="LLC1"/>
    <property type="match status" value="1"/>
</dbReference>
<evidence type="ECO:0000256" key="1">
    <source>
        <dbReference type="SAM" id="MobiDB-lite"/>
    </source>
</evidence>
<evidence type="ECO:0000269" key="2">
    <source>
    </source>
</evidence>
<evidence type="ECO:0000312" key="3">
    <source>
        <dbReference type="HGNC" id="HGNC:26324"/>
    </source>
</evidence>
<feature type="chain" id="PRO_0000307802" description="Ciliary microtubule inner protein 5">
    <location>
        <begin position="1"/>
        <end position="162"/>
    </location>
</feature>
<feature type="region of interest" description="Disordered" evidence="1">
    <location>
        <begin position="1"/>
        <end position="44"/>
    </location>
</feature>
<keyword id="KW-0966">Cell projection</keyword>
<keyword id="KW-1267">Proteomics identification</keyword>
<keyword id="KW-1185">Reference proteome</keyword>
<reference key="1">
    <citation type="journal article" date="2004" name="Nat. Genet.">
        <title>Complete sequencing and characterization of 21,243 full-length human cDNAs.</title>
        <authorList>
            <person name="Ota T."/>
            <person name="Suzuki Y."/>
            <person name="Nishikawa T."/>
            <person name="Otsuki T."/>
            <person name="Sugiyama T."/>
            <person name="Irie R."/>
            <person name="Wakamatsu A."/>
            <person name="Hayashi K."/>
            <person name="Sato H."/>
            <person name="Nagai K."/>
            <person name="Kimura K."/>
            <person name="Makita H."/>
            <person name="Sekine M."/>
            <person name="Obayashi M."/>
            <person name="Nishi T."/>
            <person name="Shibahara T."/>
            <person name="Tanaka T."/>
            <person name="Ishii S."/>
            <person name="Yamamoto J."/>
            <person name="Saito K."/>
            <person name="Kawai Y."/>
            <person name="Isono Y."/>
            <person name="Nakamura Y."/>
            <person name="Nagahari K."/>
            <person name="Murakami K."/>
            <person name="Yasuda T."/>
            <person name="Iwayanagi T."/>
            <person name="Wagatsuma M."/>
            <person name="Shiratori A."/>
            <person name="Sudo H."/>
            <person name="Hosoiri T."/>
            <person name="Kaku Y."/>
            <person name="Kodaira H."/>
            <person name="Kondo H."/>
            <person name="Sugawara M."/>
            <person name="Takahashi M."/>
            <person name="Kanda K."/>
            <person name="Yokoi T."/>
            <person name="Furuya T."/>
            <person name="Kikkawa E."/>
            <person name="Omura Y."/>
            <person name="Abe K."/>
            <person name="Kamihara K."/>
            <person name="Katsuta N."/>
            <person name="Sato K."/>
            <person name="Tanikawa M."/>
            <person name="Yamazaki M."/>
            <person name="Ninomiya K."/>
            <person name="Ishibashi T."/>
            <person name="Yamashita H."/>
            <person name="Murakawa K."/>
            <person name="Fujimori K."/>
            <person name="Tanai H."/>
            <person name="Kimata M."/>
            <person name="Watanabe M."/>
            <person name="Hiraoka S."/>
            <person name="Chiba Y."/>
            <person name="Ishida S."/>
            <person name="Ono Y."/>
            <person name="Takiguchi S."/>
            <person name="Watanabe S."/>
            <person name="Yosida M."/>
            <person name="Hotuta T."/>
            <person name="Kusano J."/>
            <person name="Kanehori K."/>
            <person name="Takahashi-Fujii A."/>
            <person name="Hara H."/>
            <person name="Tanase T.-O."/>
            <person name="Nomura Y."/>
            <person name="Togiya S."/>
            <person name="Komai F."/>
            <person name="Hara R."/>
            <person name="Takeuchi K."/>
            <person name="Arita M."/>
            <person name="Imose N."/>
            <person name="Musashino K."/>
            <person name="Yuuki H."/>
            <person name="Oshima A."/>
            <person name="Sasaki N."/>
            <person name="Aotsuka S."/>
            <person name="Yoshikawa Y."/>
            <person name="Matsunawa H."/>
            <person name="Ichihara T."/>
            <person name="Shiohata N."/>
            <person name="Sano S."/>
            <person name="Moriya S."/>
            <person name="Momiyama H."/>
            <person name="Satoh N."/>
            <person name="Takami S."/>
            <person name="Terashima Y."/>
            <person name="Suzuki O."/>
            <person name="Nakagawa S."/>
            <person name="Senoh A."/>
            <person name="Mizoguchi H."/>
            <person name="Goto Y."/>
            <person name="Shimizu F."/>
            <person name="Wakebe H."/>
            <person name="Hishigaki H."/>
            <person name="Watanabe T."/>
            <person name="Sugiyama A."/>
            <person name="Takemoto M."/>
            <person name="Kawakami B."/>
            <person name="Yamazaki M."/>
            <person name="Watanabe K."/>
            <person name="Kumagai A."/>
            <person name="Itakura S."/>
            <person name="Fukuzumi Y."/>
            <person name="Fujimori Y."/>
            <person name="Komiyama M."/>
            <person name="Tashiro H."/>
            <person name="Tanigami A."/>
            <person name="Fujiwara T."/>
            <person name="Ono T."/>
            <person name="Yamada K."/>
            <person name="Fujii Y."/>
            <person name="Ozaki K."/>
            <person name="Hirao M."/>
            <person name="Ohmori Y."/>
            <person name="Kawabata A."/>
            <person name="Hikiji T."/>
            <person name="Kobatake N."/>
            <person name="Inagaki H."/>
            <person name="Ikema Y."/>
            <person name="Okamoto S."/>
            <person name="Okitani R."/>
            <person name="Kawakami T."/>
            <person name="Noguchi S."/>
            <person name="Itoh T."/>
            <person name="Shigeta K."/>
            <person name="Senba T."/>
            <person name="Matsumura K."/>
            <person name="Nakajima Y."/>
            <person name="Mizuno T."/>
            <person name="Morinaga M."/>
            <person name="Sasaki M."/>
            <person name="Togashi T."/>
            <person name="Oyama M."/>
            <person name="Hata H."/>
            <person name="Watanabe M."/>
            <person name="Komatsu T."/>
            <person name="Mizushima-Sugano J."/>
            <person name="Satoh T."/>
            <person name="Shirai Y."/>
            <person name="Takahashi Y."/>
            <person name="Nakagawa K."/>
            <person name="Okumura K."/>
            <person name="Nagase T."/>
            <person name="Nomura N."/>
            <person name="Kikuchi H."/>
            <person name="Masuho Y."/>
            <person name="Yamashita R."/>
            <person name="Nakai K."/>
            <person name="Yada T."/>
            <person name="Nakamura Y."/>
            <person name="Ohara O."/>
            <person name="Isogai T."/>
            <person name="Sugano S."/>
        </authorList>
    </citation>
    <scope>NUCLEOTIDE SEQUENCE [LARGE SCALE MRNA]</scope>
    <source>
        <tissue>Brain</tissue>
        <tissue>Trachea</tissue>
    </source>
</reference>
<reference key="2">
    <citation type="submission" date="2005-09" db="EMBL/GenBank/DDBJ databases">
        <authorList>
            <person name="Mural R.J."/>
            <person name="Istrail S."/>
            <person name="Sutton G.G."/>
            <person name="Florea L."/>
            <person name="Halpern A.L."/>
            <person name="Mobarry C.M."/>
            <person name="Lippert R."/>
            <person name="Walenz B."/>
            <person name="Shatkay H."/>
            <person name="Dew I."/>
            <person name="Miller J.R."/>
            <person name="Flanigan M.J."/>
            <person name="Edwards N.J."/>
            <person name="Bolanos R."/>
            <person name="Fasulo D."/>
            <person name="Halldorsson B.V."/>
            <person name="Hannenhalli S."/>
            <person name="Turner R."/>
            <person name="Yooseph S."/>
            <person name="Lu F."/>
            <person name="Nusskern D.R."/>
            <person name="Shue B.C."/>
            <person name="Zheng X.H."/>
            <person name="Zhong F."/>
            <person name="Delcher A.L."/>
            <person name="Huson D.H."/>
            <person name="Kravitz S.A."/>
            <person name="Mouchard L."/>
            <person name="Reinert K."/>
            <person name="Remington K.A."/>
            <person name="Clark A.G."/>
            <person name="Waterman M.S."/>
            <person name="Eichler E.E."/>
            <person name="Adams M.D."/>
            <person name="Hunkapiller M.W."/>
            <person name="Myers E.W."/>
            <person name="Venter J.C."/>
        </authorList>
    </citation>
    <scope>NUCLEOTIDE SEQUENCE [LARGE SCALE GENOMIC DNA]</scope>
</reference>
<reference key="3">
    <citation type="journal article" date="2004" name="Genome Res.">
        <title>The status, quality, and expansion of the NIH full-length cDNA project: the Mammalian Gene Collection (MGC).</title>
        <authorList>
            <consortium name="The MGC Project Team"/>
        </authorList>
    </citation>
    <scope>NUCLEOTIDE SEQUENCE [LARGE SCALE MRNA]</scope>
</reference>
<reference key="4">
    <citation type="journal article" date="2024" name="Nat. Commun.">
        <title>Uncovering structural themes across cilia microtubule inner proteins with implications for human cilia function.</title>
        <authorList>
            <person name="Andersen J.S."/>
            <person name="Vijayakumaran A."/>
            <person name="Godbehere C."/>
            <person name="Lorentzen E."/>
            <person name="Mennella V."/>
            <person name="Schou K.B."/>
        </authorList>
    </citation>
    <scope>SUBCELLULAR LOCATION</scope>
</reference>
<sequence length="162" mass="17838">MGSHPTPGLQRTTSAGYRLPPTRPPASVSPAARGGPMASRGLAGGCQAPQALKAQRVAQGAACDGVQQDQLWRELLEAERRGQQRWIQNWSFLKDYDPMGNKKEPEKLPDHVPLFSDTVPSSTNQVVGSRLDTPLGQTLIRMDFFFTEGARKKKLEDQMQPI</sequence>